<evidence type="ECO:0000255" key="1">
    <source>
        <dbReference type="HAMAP-Rule" id="MF_00083"/>
    </source>
</evidence>
<accession>Q6G2L1</accession>
<comment type="function">
    <text evidence="1">Hydrolyzes ribosome-free peptidyl-tRNAs (with 1 or more amino acids incorporated), which drop off the ribosome during protein synthesis, or as a result of ribosome stalling.</text>
</comment>
<comment type="function">
    <text evidence="1">Catalyzes the release of premature peptidyl moieties from peptidyl-tRNA molecules trapped in stalled 50S ribosomal subunits, and thus maintains levels of free tRNAs and 50S ribosomes.</text>
</comment>
<comment type="catalytic activity">
    <reaction evidence="1">
        <text>an N-acyl-L-alpha-aminoacyl-tRNA + H2O = an N-acyl-L-amino acid + a tRNA + H(+)</text>
        <dbReference type="Rhea" id="RHEA:54448"/>
        <dbReference type="Rhea" id="RHEA-COMP:10123"/>
        <dbReference type="Rhea" id="RHEA-COMP:13883"/>
        <dbReference type="ChEBI" id="CHEBI:15377"/>
        <dbReference type="ChEBI" id="CHEBI:15378"/>
        <dbReference type="ChEBI" id="CHEBI:59874"/>
        <dbReference type="ChEBI" id="CHEBI:78442"/>
        <dbReference type="ChEBI" id="CHEBI:138191"/>
        <dbReference type="EC" id="3.1.1.29"/>
    </reaction>
</comment>
<comment type="subunit">
    <text evidence="1">Monomer.</text>
</comment>
<comment type="subcellular location">
    <subcellularLocation>
        <location evidence="1">Cytoplasm</location>
    </subcellularLocation>
</comment>
<comment type="similarity">
    <text evidence="1">Belongs to the PTH family.</text>
</comment>
<sequence length="193" mass="21647">MWLIAGLGNPGLQYQNNRHNIGFMAIDAIYQSFSFSPWSKKFQAEISTGLINGKKTFLLKPQTFMNLSGQAIGEALRFYKLDLKNFIVIYDELDLPPGRVRVKIGGGNNGHNGIKSIDAHCGTDYCRIRLGIGRPNSKELVYQHVLGNFTKSDQEWLPSLLEAIAKNIALLIKGNKCLFMNEISQAMKNKNLQ</sequence>
<gene>
    <name evidence="1" type="primary">pth</name>
    <name type="ordered locus">BH11860</name>
</gene>
<keyword id="KW-0963">Cytoplasm</keyword>
<keyword id="KW-0378">Hydrolase</keyword>
<keyword id="KW-0694">RNA-binding</keyword>
<keyword id="KW-0820">tRNA-binding</keyword>
<name>PTH_BARHE</name>
<reference key="1">
    <citation type="journal article" date="2004" name="Proc. Natl. Acad. Sci. U.S.A.">
        <title>The louse-borne human pathogen Bartonella quintana is a genomic derivative of the zoonotic agent Bartonella henselae.</title>
        <authorList>
            <person name="Alsmark U.C.M."/>
            <person name="Frank A.C."/>
            <person name="Karlberg E.O."/>
            <person name="Legault B.-A."/>
            <person name="Ardell D.H."/>
            <person name="Canbaeck B."/>
            <person name="Eriksson A.-S."/>
            <person name="Naeslund A.K."/>
            <person name="Handley S.A."/>
            <person name="Huvet M."/>
            <person name="La Scola B."/>
            <person name="Holmberg M."/>
            <person name="Andersson S.G.E."/>
        </authorList>
    </citation>
    <scope>NUCLEOTIDE SEQUENCE [LARGE SCALE GENOMIC DNA]</scope>
    <source>
        <strain>ATCC 49882 / DSM 28221 / CCUG 30454 / Houston 1</strain>
    </source>
</reference>
<protein>
    <recommendedName>
        <fullName evidence="1">Peptidyl-tRNA hydrolase</fullName>
        <shortName evidence="1">Pth</shortName>
        <ecNumber evidence="1">3.1.1.29</ecNumber>
    </recommendedName>
</protein>
<feature type="chain" id="PRO_0000187694" description="Peptidyl-tRNA hydrolase">
    <location>
        <begin position="1"/>
        <end position="193"/>
    </location>
</feature>
<feature type="active site" description="Proton acceptor" evidence="1">
    <location>
        <position position="19"/>
    </location>
</feature>
<feature type="binding site" evidence="1">
    <location>
        <position position="14"/>
    </location>
    <ligand>
        <name>tRNA</name>
        <dbReference type="ChEBI" id="CHEBI:17843"/>
    </ligand>
</feature>
<feature type="binding site" evidence="1">
    <location>
        <position position="64"/>
    </location>
    <ligand>
        <name>tRNA</name>
        <dbReference type="ChEBI" id="CHEBI:17843"/>
    </ligand>
</feature>
<feature type="binding site" evidence="1">
    <location>
        <position position="66"/>
    </location>
    <ligand>
        <name>tRNA</name>
        <dbReference type="ChEBI" id="CHEBI:17843"/>
    </ligand>
</feature>
<feature type="binding site" evidence="1">
    <location>
        <position position="112"/>
    </location>
    <ligand>
        <name>tRNA</name>
        <dbReference type="ChEBI" id="CHEBI:17843"/>
    </ligand>
</feature>
<feature type="site" description="Discriminates between blocked and unblocked aminoacyl-tRNA" evidence="1">
    <location>
        <position position="9"/>
    </location>
</feature>
<feature type="site" description="Stabilizes the basic form of H active site to accept a proton" evidence="1">
    <location>
        <position position="91"/>
    </location>
</feature>
<organism>
    <name type="scientific">Bartonella henselae (strain ATCC 49882 / DSM 28221 / CCUG 30454 / Houston 1)</name>
    <name type="common">Rochalimaea henselae</name>
    <dbReference type="NCBI Taxonomy" id="283166"/>
    <lineage>
        <taxon>Bacteria</taxon>
        <taxon>Pseudomonadati</taxon>
        <taxon>Pseudomonadota</taxon>
        <taxon>Alphaproteobacteria</taxon>
        <taxon>Hyphomicrobiales</taxon>
        <taxon>Bartonellaceae</taxon>
        <taxon>Bartonella</taxon>
    </lineage>
</organism>
<proteinExistence type="inferred from homology"/>
<dbReference type="EC" id="3.1.1.29" evidence="1"/>
<dbReference type="EMBL" id="BX897699">
    <property type="protein sequence ID" value="CAF27969.1"/>
    <property type="molecule type" value="Genomic_DNA"/>
</dbReference>
<dbReference type="RefSeq" id="WP_011181026.1">
    <property type="nucleotide sequence ID" value="NZ_LRIJ02000001.1"/>
</dbReference>
<dbReference type="SMR" id="Q6G2L1"/>
<dbReference type="PaxDb" id="283166-BH11860"/>
<dbReference type="EnsemblBacteria" id="CAF27969">
    <property type="protein sequence ID" value="CAF27969"/>
    <property type="gene ID" value="BH11860"/>
</dbReference>
<dbReference type="GeneID" id="92985795"/>
<dbReference type="KEGG" id="bhe:BH11860"/>
<dbReference type="eggNOG" id="COG0193">
    <property type="taxonomic scope" value="Bacteria"/>
</dbReference>
<dbReference type="OrthoDB" id="9800507at2"/>
<dbReference type="Proteomes" id="UP000000421">
    <property type="component" value="Chromosome"/>
</dbReference>
<dbReference type="GO" id="GO:0005737">
    <property type="term" value="C:cytoplasm"/>
    <property type="evidence" value="ECO:0007669"/>
    <property type="project" value="UniProtKB-SubCell"/>
</dbReference>
<dbReference type="GO" id="GO:0004045">
    <property type="term" value="F:peptidyl-tRNA hydrolase activity"/>
    <property type="evidence" value="ECO:0007669"/>
    <property type="project" value="UniProtKB-UniRule"/>
</dbReference>
<dbReference type="GO" id="GO:0000049">
    <property type="term" value="F:tRNA binding"/>
    <property type="evidence" value="ECO:0007669"/>
    <property type="project" value="UniProtKB-UniRule"/>
</dbReference>
<dbReference type="GO" id="GO:0006515">
    <property type="term" value="P:protein quality control for misfolded or incompletely synthesized proteins"/>
    <property type="evidence" value="ECO:0007669"/>
    <property type="project" value="UniProtKB-UniRule"/>
</dbReference>
<dbReference type="GO" id="GO:0072344">
    <property type="term" value="P:rescue of stalled ribosome"/>
    <property type="evidence" value="ECO:0007669"/>
    <property type="project" value="UniProtKB-UniRule"/>
</dbReference>
<dbReference type="CDD" id="cd00462">
    <property type="entry name" value="PTH"/>
    <property type="match status" value="1"/>
</dbReference>
<dbReference type="FunFam" id="3.40.50.1470:FF:000001">
    <property type="entry name" value="Peptidyl-tRNA hydrolase"/>
    <property type="match status" value="1"/>
</dbReference>
<dbReference type="Gene3D" id="3.40.50.1470">
    <property type="entry name" value="Peptidyl-tRNA hydrolase"/>
    <property type="match status" value="1"/>
</dbReference>
<dbReference type="HAMAP" id="MF_00083">
    <property type="entry name" value="Pept_tRNA_hydro_bact"/>
    <property type="match status" value="1"/>
</dbReference>
<dbReference type="InterPro" id="IPR001328">
    <property type="entry name" value="Pept_tRNA_hydro"/>
</dbReference>
<dbReference type="InterPro" id="IPR018171">
    <property type="entry name" value="Pept_tRNA_hydro_CS"/>
</dbReference>
<dbReference type="InterPro" id="IPR036416">
    <property type="entry name" value="Pept_tRNA_hydro_sf"/>
</dbReference>
<dbReference type="NCBIfam" id="TIGR00447">
    <property type="entry name" value="pth"/>
    <property type="match status" value="1"/>
</dbReference>
<dbReference type="PANTHER" id="PTHR17224">
    <property type="entry name" value="PEPTIDYL-TRNA HYDROLASE"/>
    <property type="match status" value="1"/>
</dbReference>
<dbReference type="PANTHER" id="PTHR17224:SF1">
    <property type="entry name" value="PEPTIDYL-TRNA HYDROLASE"/>
    <property type="match status" value="1"/>
</dbReference>
<dbReference type="Pfam" id="PF01195">
    <property type="entry name" value="Pept_tRNA_hydro"/>
    <property type="match status" value="1"/>
</dbReference>
<dbReference type="SUPFAM" id="SSF53178">
    <property type="entry name" value="Peptidyl-tRNA hydrolase-like"/>
    <property type="match status" value="1"/>
</dbReference>
<dbReference type="PROSITE" id="PS01195">
    <property type="entry name" value="PEPT_TRNA_HYDROL_1"/>
    <property type="match status" value="1"/>
</dbReference>
<dbReference type="PROSITE" id="PS01196">
    <property type="entry name" value="PEPT_TRNA_HYDROL_2"/>
    <property type="match status" value="1"/>
</dbReference>